<name>RR18_ANEMR</name>
<gene>
    <name evidence="1" type="primary">rps18</name>
</gene>
<evidence type="ECO:0000255" key="1">
    <source>
        <dbReference type="HAMAP-Rule" id="MF_00270"/>
    </source>
</evidence>
<evidence type="ECO:0000305" key="2"/>
<accession>B0YPQ0</accession>
<protein>
    <recommendedName>
        <fullName evidence="2">Small ribosomal subunit protein bS18c</fullName>
    </recommendedName>
    <alternativeName>
        <fullName>Plastid 30S ribosomal protein S18</fullName>
    </alternativeName>
</protein>
<proteinExistence type="inferred from homology"/>
<organism>
    <name type="scientific">Aneura mirabilis</name>
    <name type="common">Parasitic liverwort</name>
    <name type="synonym">Cryptothallus mirabilis</name>
    <dbReference type="NCBI Taxonomy" id="280810"/>
    <lineage>
        <taxon>Eukaryota</taxon>
        <taxon>Viridiplantae</taxon>
        <taxon>Streptophyta</taxon>
        <taxon>Embryophyta</taxon>
        <taxon>Marchantiophyta</taxon>
        <taxon>Jungermanniopsida</taxon>
        <taxon>Metzgeriidae</taxon>
        <taxon>Metzgeriales</taxon>
        <taxon>Aneuraceae</taxon>
        <taxon>Aneura</taxon>
    </lineage>
</organism>
<dbReference type="EMBL" id="EU043314">
    <property type="protein sequence ID" value="ABS54497.1"/>
    <property type="molecule type" value="Genomic_DNA"/>
</dbReference>
<dbReference type="RefSeq" id="YP_001687236.1">
    <property type="nucleotide sequence ID" value="NC_010359.1"/>
</dbReference>
<dbReference type="SMR" id="B0YPQ0"/>
<dbReference type="GeneID" id="5952207"/>
<dbReference type="GO" id="GO:0005763">
    <property type="term" value="C:mitochondrial small ribosomal subunit"/>
    <property type="evidence" value="ECO:0007669"/>
    <property type="project" value="TreeGrafter"/>
</dbReference>
<dbReference type="GO" id="GO:0009536">
    <property type="term" value="C:plastid"/>
    <property type="evidence" value="ECO:0007669"/>
    <property type="project" value="UniProtKB-SubCell"/>
</dbReference>
<dbReference type="GO" id="GO:0070181">
    <property type="term" value="F:small ribosomal subunit rRNA binding"/>
    <property type="evidence" value="ECO:0007669"/>
    <property type="project" value="TreeGrafter"/>
</dbReference>
<dbReference type="GO" id="GO:0003735">
    <property type="term" value="F:structural constituent of ribosome"/>
    <property type="evidence" value="ECO:0007669"/>
    <property type="project" value="InterPro"/>
</dbReference>
<dbReference type="GO" id="GO:0006412">
    <property type="term" value="P:translation"/>
    <property type="evidence" value="ECO:0007669"/>
    <property type="project" value="InterPro"/>
</dbReference>
<dbReference type="FunFam" id="4.10.640.10:FF:000002">
    <property type="entry name" value="30S ribosomal protein S18, chloroplastic"/>
    <property type="match status" value="1"/>
</dbReference>
<dbReference type="Gene3D" id="4.10.640.10">
    <property type="entry name" value="Ribosomal protein S18"/>
    <property type="match status" value="1"/>
</dbReference>
<dbReference type="HAMAP" id="MF_00270">
    <property type="entry name" value="Ribosomal_bS18"/>
    <property type="match status" value="1"/>
</dbReference>
<dbReference type="InterPro" id="IPR001648">
    <property type="entry name" value="Ribosomal_bS18"/>
</dbReference>
<dbReference type="InterPro" id="IPR036870">
    <property type="entry name" value="Ribosomal_bS18_sf"/>
</dbReference>
<dbReference type="NCBIfam" id="TIGR00165">
    <property type="entry name" value="S18"/>
    <property type="match status" value="1"/>
</dbReference>
<dbReference type="PANTHER" id="PTHR13479">
    <property type="entry name" value="30S RIBOSOMAL PROTEIN S18"/>
    <property type="match status" value="1"/>
</dbReference>
<dbReference type="PANTHER" id="PTHR13479:SF40">
    <property type="entry name" value="SMALL RIBOSOMAL SUBUNIT PROTEIN BS18M"/>
    <property type="match status" value="1"/>
</dbReference>
<dbReference type="Pfam" id="PF01084">
    <property type="entry name" value="Ribosomal_S18"/>
    <property type="match status" value="1"/>
</dbReference>
<dbReference type="PRINTS" id="PR00974">
    <property type="entry name" value="RIBOSOMALS18"/>
</dbReference>
<dbReference type="SUPFAM" id="SSF46911">
    <property type="entry name" value="Ribosomal protein S18"/>
    <property type="match status" value="1"/>
</dbReference>
<reference key="1">
    <citation type="journal article" date="2008" name="Mol. Biol. Evol.">
        <title>Functional gene losses occur with minimal size reduction in the plastid genome of the parasitic liverwort Aneura mirabilis.</title>
        <authorList>
            <person name="Wickett N.J."/>
            <person name="Zhang Y."/>
            <person name="Hansen S.K."/>
            <person name="Roper J.M."/>
            <person name="Kuehl J.V."/>
            <person name="Plock S.A."/>
            <person name="Wolf P.G."/>
            <person name="dePamphilis C.W."/>
            <person name="Boore J.L."/>
            <person name="Goffinet B."/>
        </authorList>
    </citation>
    <scope>NUCLEOTIDE SEQUENCE [LARGE SCALE GENOMIC DNA]</scope>
</reference>
<feature type="chain" id="PRO_0000345566" description="Small ribosomal subunit protein bS18c">
    <location>
        <begin position="1"/>
        <end position="75"/>
    </location>
</feature>
<geneLocation type="non-photosynthetic plastid"/>
<comment type="subunit">
    <text evidence="1">Part of the 30S ribosomal subunit.</text>
</comment>
<comment type="subcellular location">
    <subcellularLocation>
        <location>Plastid</location>
    </subcellularLocation>
</comment>
<comment type="similarity">
    <text evidence="1">Belongs to the bacterial ribosomal protein bS18 family.</text>
</comment>
<keyword id="KW-0934">Plastid</keyword>
<keyword id="KW-0687">Ribonucleoprotein</keyword>
<keyword id="KW-0689">Ribosomal protein</keyword>
<keyword id="KW-0694">RNA-binding</keyword>
<keyword id="KW-0699">rRNA-binding</keyword>
<sequence length="75" mass="8755">MNRSKKNSRKRLPAIRSGEFIDYRNISLLRRFVSEQGRILSRRTNRLTSKQQRVLTAAIKQARILASLPFPNSEN</sequence>